<proteinExistence type="inferred from homology"/>
<keyword id="KW-0963">Cytoplasm</keyword>
<keyword id="KW-0460">Magnesium</keyword>
<keyword id="KW-0479">Metal-binding</keyword>
<keyword id="KW-0548">Nucleotidyltransferase</keyword>
<keyword id="KW-0694">RNA-binding</keyword>
<keyword id="KW-0808">Transferase</keyword>
<name>PNP_RHOP5</name>
<comment type="function">
    <text evidence="1">Involved in mRNA degradation. Catalyzes the phosphorolysis of single-stranded polyribonucleotides processively in the 3'- to 5'-direction.</text>
</comment>
<comment type="catalytic activity">
    <reaction evidence="1">
        <text>RNA(n+1) + phosphate = RNA(n) + a ribonucleoside 5'-diphosphate</text>
        <dbReference type="Rhea" id="RHEA:22096"/>
        <dbReference type="Rhea" id="RHEA-COMP:14527"/>
        <dbReference type="Rhea" id="RHEA-COMP:17342"/>
        <dbReference type="ChEBI" id="CHEBI:43474"/>
        <dbReference type="ChEBI" id="CHEBI:57930"/>
        <dbReference type="ChEBI" id="CHEBI:140395"/>
        <dbReference type="EC" id="2.7.7.8"/>
    </reaction>
</comment>
<comment type="cofactor">
    <cofactor evidence="1">
        <name>Mg(2+)</name>
        <dbReference type="ChEBI" id="CHEBI:18420"/>
    </cofactor>
</comment>
<comment type="subcellular location">
    <subcellularLocation>
        <location evidence="1">Cytoplasm</location>
    </subcellularLocation>
</comment>
<comment type="similarity">
    <text evidence="1">Belongs to the polyribonucleotide nucleotidyltransferase family.</text>
</comment>
<protein>
    <recommendedName>
        <fullName evidence="1">Polyribonucleotide nucleotidyltransferase</fullName>
        <ecNumber evidence="1">2.7.7.8</ecNumber>
    </recommendedName>
    <alternativeName>
        <fullName evidence="1">Polynucleotide phosphorylase</fullName>
        <shortName evidence="1">PNPase</shortName>
    </alternativeName>
</protein>
<organism>
    <name type="scientific">Rhodopseudomonas palustris (strain BisA53)</name>
    <dbReference type="NCBI Taxonomy" id="316055"/>
    <lineage>
        <taxon>Bacteria</taxon>
        <taxon>Pseudomonadati</taxon>
        <taxon>Pseudomonadota</taxon>
        <taxon>Alphaproteobacteria</taxon>
        <taxon>Hyphomicrobiales</taxon>
        <taxon>Nitrobacteraceae</taxon>
        <taxon>Rhodopseudomonas</taxon>
    </lineage>
</organism>
<accession>Q07V82</accession>
<dbReference type="EC" id="2.7.7.8" evidence="1"/>
<dbReference type="EMBL" id="CP000463">
    <property type="protein sequence ID" value="ABJ04152.1"/>
    <property type="molecule type" value="Genomic_DNA"/>
</dbReference>
<dbReference type="SMR" id="Q07V82"/>
<dbReference type="STRING" id="316055.RPE_0192"/>
<dbReference type="KEGG" id="rpe:RPE_0192"/>
<dbReference type="eggNOG" id="COG1185">
    <property type="taxonomic scope" value="Bacteria"/>
</dbReference>
<dbReference type="HOGENOM" id="CLU_004217_2_2_5"/>
<dbReference type="OrthoDB" id="9804305at2"/>
<dbReference type="GO" id="GO:0005829">
    <property type="term" value="C:cytosol"/>
    <property type="evidence" value="ECO:0007669"/>
    <property type="project" value="TreeGrafter"/>
</dbReference>
<dbReference type="GO" id="GO:0000175">
    <property type="term" value="F:3'-5'-RNA exonuclease activity"/>
    <property type="evidence" value="ECO:0007669"/>
    <property type="project" value="TreeGrafter"/>
</dbReference>
<dbReference type="GO" id="GO:0000287">
    <property type="term" value="F:magnesium ion binding"/>
    <property type="evidence" value="ECO:0007669"/>
    <property type="project" value="UniProtKB-UniRule"/>
</dbReference>
<dbReference type="GO" id="GO:0004654">
    <property type="term" value="F:polyribonucleotide nucleotidyltransferase activity"/>
    <property type="evidence" value="ECO:0007669"/>
    <property type="project" value="UniProtKB-UniRule"/>
</dbReference>
<dbReference type="GO" id="GO:0003723">
    <property type="term" value="F:RNA binding"/>
    <property type="evidence" value="ECO:0007669"/>
    <property type="project" value="UniProtKB-UniRule"/>
</dbReference>
<dbReference type="GO" id="GO:0006402">
    <property type="term" value="P:mRNA catabolic process"/>
    <property type="evidence" value="ECO:0007669"/>
    <property type="project" value="UniProtKB-UniRule"/>
</dbReference>
<dbReference type="GO" id="GO:0006396">
    <property type="term" value="P:RNA processing"/>
    <property type="evidence" value="ECO:0007669"/>
    <property type="project" value="InterPro"/>
</dbReference>
<dbReference type="CDD" id="cd02393">
    <property type="entry name" value="KH-I_PNPase"/>
    <property type="match status" value="1"/>
</dbReference>
<dbReference type="CDD" id="cd11363">
    <property type="entry name" value="RNase_PH_PNPase_1"/>
    <property type="match status" value="1"/>
</dbReference>
<dbReference type="CDD" id="cd11364">
    <property type="entry name" value="RNase_PH_PNPase_2"/>
    <property type="match status" value="1"/>
</dbReference>
<dbReference type="CDD" id="cd04472">
    <property type="entry name" value="S1_PNPase"/>
    <property type="match status" value="1"/>
</dbReference>
<dbReference type="FunFam" id="2.40.50.140:FF:000107">
    <property type="entry name" value="Polyribonucleotide nucleotidyltransferase"/>
    <property type="match status" value="1"/>
</dbReference>
<dbReference type="FunFam" id="3.30.1370.10:FF:000001">
    <property type="entry name" value="Polyribonucleotide nucleotidyltransferase"/>
    <property type="match status" value="1"/>
</dbReference>
<dbReference type="FunFam" id="3.30.230.70:FF:000001">
    <property type="entry name" value="Polyribonucleotide nucleotidyltransferase"/>
    <property type="match status" value="1"/>
</dbReference>
<dbReference type="FunFam" id="3.30.230.70:FF:000002">
    <property type="entry name" value="Polyribonucleotide nucleotidyltransferase"/>
    <property type="match status" value="1"/>
</dbReference>
<dbReference type="Gene3D" id="3.30.230.70">
    <property type="entry name" value="GHMP Kinase, N-terminal domain"/>
    <property type="match status" value="2"/>
</dbReference>
<dbReference type="Gene3D" id="3.30.1370.10">
    <property type="entry name" value="K Homology domain, type 1"/>
    <property type="match status" value="1"/>
</dbReference>
<dbReference type="Gene3D" id="2.40.50.140">
    <property type="entry name" value="Nucleic acid-binding proteins"/>
    <property type="match status" value="1"/>
</dbReference>
<dbReference type="HAMAP" id="MF_01595">
    <property type="entry name" value="PNPase"/>
    <property type="match status" value="1"/>
</dbReference>
<dbReference type="InterPro" id="IPR001247">
    <property type="entry name" value="ExoRNase_PH_dom1"/>
</dbReference>
<dbReference type="InterPro" id="IPR015847">
    <property type="entry name" value="ExoRNase_PH_dom2"/>
</dbReference>
<dbReference type="InterPro" id="IPR036345">
    <property type="entry name" value="ExoRNase_PH_dom2_sf"/>
</dbReference>
<dbReference type="InterPro" id="IPR004087">
    <property type="entry name" value="KH_dom"/>
</dbReference>
<dbReference type="InterPro" id="IPR004088">
    <property type="entry name" value="KH_dom_type_1"/>
</dbReference>
<dbReference type="InterPro" id="IPR036612">
    <property type="entry name" value="KH_dom_type_1_sf"/>
</dbReference>
<dbReference type="InterPro" id="IPR012340">
    <property type="entry name" value="NA-bd_OB-fold"/>
</dbReference>
<dbReference type="InterPro" id="IPR012162">
    <property type="entry name" value="PNPase"/>
</dbReference>
<dbReference type="InterPro" id="IPR027408">
    <property type="entry name" value="PNPase/RNase_PH_dom_sf"/>
</dbReference>
<dbReference type="InterPro" id="IPR015848">
    <property type="entry name" value="PNPase_PH_RNA-bd_bac/org-type"/>
</dbReference>
<dbReference type="InterPro" id="IPR020568">
    <property type="entry name" value="Ribosomal_Su5_D2-typ_SF"/>
</dbReference>
<dbReference type="InterPro" id="IPR003029">
    <property type="entry name" value="S1_domain"/>
</dbReference>
<dbReference type="NCBIfam" id="TIGR03591">
    <property type="entry name" value="polynuc_phos"/>
    <property type="match status" value="1"/>
</dbReference>
<dbReference type="NCBIfam" id="NF008805">
    <property type="entry name" value="PRK11824.1"/>
    <property type="match status" value="1"/>
</dbReference>
<dbReference type="PANTHER" id="PTHR11252">
    <property type="entry name" value="POLYRIBONUCLEOTIDE NUCLEOTIDYLTRANSFERASE"/>
    <property type="match status" value="1"/>
</dbReference>
<dbReference type="PANTHER" id="PTHR11252:SF0">
    <property type="entry name" value="POLYRIBONUCLEOTIDE NUCLEOTIDYLTRANSFERASE 1, MITOCHONDRIAL"/>
    <property type="match status" value="1"/>
</dbReference>
<dbReference type="Pfam" id="PF00013">
    <property type="entry name" value="KH_1"/>
    <property type="match status" value="1"/>
</dbReference>
<dbReference type="Pfam" id="PF03726">
    <property type="entry name" value="PNPase"/>
    <property type="match status" value="1"/>
</dbReference>
<dbReference type="Pfam" id="PF01138">
    <property type="entry name" value="RNase_PH"/>
    <property type="match status" value="2"/>
</dbReference>
<dbReference type="Pfam" id="PF03725">
    <property type="entry name" value="RNase_PH_C"/>
    <property type="match status" value="2"/>
</dbReference>
<dbReference type="Pfam" id="PF00575">
    <property type="entry name" value="S1"/>
    <property type="match status" value="1"/>
</dbReference>
<dbReference type="PIRSF" id="PIRSF005499">
    <property type="entry name" value="PNPase"/>
    <property type="match status" value="1"/>
</dbReference>
<dbReference type="SMART" id="SM00322">
    <property type="entry name" value="KH"/>
    <property type="match status" value="1"/>
</dbReference>
<dbReference type="SMART" id="SM00316">
    <property type="entry name" value="S1"/>
    <property type="match status" value="1"/>
</dbReference>
<dbReference type="SUPFAM" id="SSF54791">
    <property type="entry name" value="Eukaryotic type KH-domain (KH-domain type I)"/>
    <property type="match status" value="1"/>
</dbReference>
<dbReference type="SUPFAM" id="SSF50249">
    <property type="entry name" value="Nucleic acid-binding proteins"/>
    <property type="match status" value="1"/>
</dbReference>
<dbReference type="SUPFAM" id="SSF55666">
    <property type="entry name" value="Ribonuclease PH domain 2-like"/>
    <property type="match status" value="2"/>
</dbReference>
<dbReference type="SUPFAM" id="SSF54211">
    <property type="entry name" value="Ribosomal protein S5 domain 2-like"/>
    <property type="match status" value="2"/>
</dbReference>
<dbReference type="PROSITE" id="PS50084">
    <property type="entry name" value="KH_TYPE_1"/>
    <property type="match status" value="1"/>
</dbReference>
<dbReference type="PROSITE" id="PS50126">
    <property type="entry name" value="S1"/>
    <property type="match status" value="1"/>
</dbReference>
<sequence length="721" mass="78436">MFHKHSVEIDWGGRPLKLETGKIARQADGAVVATYGETVVLATVVAAKTPREGVDFLPLTVDYIEKTYAAGRIPGGYFKREGRPTEKETLVSRLIDRPIRPLFVDGWRNETQVIVTVLSHDMENDPDILALVATSAALTLSGAPFKGPIGAARVGFINDEYVLNPVLDEMIETQLDLVVAGTADAVLMVESEAKELNEDIMLGAVMFGHRHFQPVVQAIIELAEKAAKEPRDVKVIDESVLEKEILGLIEQDLRAAYAIPVKQDRYAAVGKAKDKVMAHYFPEGQEPQYDKLRIAGVFKELEAKIVRWNILDTGKRIDGRDSTTVRQIIAEVGVLPRAHGSALFTRGETQALVVTTLGTGEDEQYIDSLSGTYKEQFLLHYNFPPFSVGETGRMGGTKRREIGHGKLAWRALHPVLPPHHEFPYTLRVVSEITESNGSSSMASVCGASLALMDAGVPLKRPTAGIAMGLILEGERFAVLSDILGDEDHLGDMDFKVAGTDHGITSLQMDIKIAGITEEIMKVALGQAKEGRIHILGEMSKALTNARAELGEYAPRIETFKIPTDKIREVIGTGGKVIREIVEKTGAKVNIDDDGTVKVASSDGESIKAAIKWIKSIASDPELNAIYDGTVVKVMEFGAFVNFFGAKDGLVHISQLAAGRVQKTSDVVKEGDKVKVKLLGFDDRGKTRLSMKVVDQETGEDLEAKQKAEAEKAKAEGAPAAE</sequence>
<evidence type="ECO:0000255" key="1">
    <source>
        <dbReference type="HAMAP-Rule" id="MF_01595"/>
    </source>
</evidence>
<evidence type="ECO:0000256" key="2">
    <source>
        <dbReference type="SAM" id="MobiDB-lite"/>
    </source>
</evidence>
<feature type="chain" id="PRO_0000329810" description="Polyribonucleotide nucleotidyltransferase">
    <location>
        <begin position="1"/>
        <end position="721"/>
    </location>
</feature>
<feature type="domain" description="KH" evidence="1">
    <location>
        <begin position="554"/>
        <end position="613"/>
    </location>
</feature>
<feature type="domain" description="S1 motif" evidence="1">
    <location>
        <begin position="623"/>
        <end position="691"/>
    </location>
</feature>
<feature type="region of interest" description="Disordered" evidence="2">
    <location>
        <begin position="697"/>
        <end position="721"/>
    </location>
</feature>
<feature type="compositionally biased region" description="Basic and acidic residues" evidence="2">
    <location>
        <begin position="701"/>
        <end position="714"/>
    </location>
</feature>
<feature type="binding site" evidence="1">
    <location>
        <position position="487"/>
    </location>
    <ligand>
        <name>Mg(2+)</name>
        <dbReference type="ChEBI" id="CHEBI:18420"/>
    </ligand>
</feature>
<feature type="binding site" evidence="1">
    <location>
        <position position="493"/>
    </location>
    <ligand>
        <name>Mg(2+)</name>
        <dbReference type="ChEBI" id="CHEBI:18420"/>
    </ligand>
</feature>
<gene>
    <name evidence="1" type="primary">pnp</name>
    <name type="ordered locus">RPE_0192</name>
</gene>
<reference key="1">
    <citation type="submission" date="2006-09" db="EMBL/GenBank/DDBJ databases">
        <title>Complete sequence of Rhodopseudomonas palustris BisA53.</title>
        <authorList>
            <consortium name="US DOE Joint Genome Institute"/>
            <person name="Copeland A."/>
            <person name="Lucas S."/>
            <person name="Lapidus A."/>
            <person name="Barry K."/>
            <person name="Detter J.C."/>
            <person name="Glavina del Rio T."/>
            <person name="Hammon N."/>
            <person name="Israni S."/>
            <person name="Dalin E."/>
            <person name="Tice H."/>
            <person name="Pitluck S."/>
            <person name="Chain P."/>
            <person name="Malfatti S."/>
            <person name="Shin M."/>
            <person name="Vergez L."/>
            <person name="Schmutz J."/>
            <person name="Larimer F."/>
            <person name="Land M."/>
            <person name="Hauser L."/>
            <person name="Pelletier D.A."/>
            <person name="Kyrpides N."/>
            <person name="Kim E."/>
            <person name="Harwood C.S."/>
            <person name="Oda Y."/>
            <person name="Richardson P."/>
        </authorList>
    </citation>
    <scope>NUCLEOTIDE SEQUENCE [LARGE SCALE GENOMIC DNA]</scope>
    <source>
        <strain>BisA53</strain>
    </source>
</reference>